<proteinExistence type="inferred from homology"/>
<feature type="signal peptide" evidence="3">
    <location>
        <begin position="1"/>
        <end position="15"/>
    </location>
</feature>
<feature type="chain" id="PRO_0000094153" description="Superinfection exclusion protein">
    <location>
        <begin position="16"/>
        <end position="373"/>
    </location>
</feature>
<organismHost>
    <name type="scientific">Homo sapiens</name>
    <name type="common">Human</name>
    <dbReference type="NCBI Taxonomy" id="9606"/>
</organismHost>
<name>PG040_VAR67</name>
<keyword id="KW-1032">Host cell membrane</keyword>
<keyword id="KW-1043">Host membrane</keyword>
<keyword id="KW-0472">Membrane</keyword>
<keyword id="KW-0646">Protease inhibitor</keyword>
<keyword id="KW-1185">Reference proteome</keyword>
<keyword id="KW-0722">Serine protease inhibitor</keyword>
<keyword id="KW-0732">Signal</keyword>
<keyword id="KW-0946">Virion</keyword>
<comment type="function">
    <text evidence="1">Prevents cell to cell fusion via its interaction with A56 protein. The A56-K2 complex associates with components of the entry fusion complex (EFC) presumably to avoid superinfection and syncytium formation (By similarity).</text>
</comment>
<comment type="subunit">
    <text evidence="1">Interacts with A56 protein.</text>
</comment>
<comment type="subcellular location">
    <subcellularLocation>
        <location evidence="1">Virion membrane</location>
        <topology evidence="1">Peripheral membrane protein</topology>
    </subcellularLocation>
    <subcellularLocation>
        <location evidence="1">Host cell membrane</location>
        <topology evidence="1">Peripheral membrane protein</topology>
        <orientation evidence="1">Extracellular side</orientation>
    </subcellularLocation>
    <text evidence="1">Component of extracellular enveloped virus (EEV) but not intracellular mature virus (IMV). Anchored to the surface of the outermost membrane of EEV via its interaction with A56 protein (By similarity).</text>
</comment>
<comment type="induction">
    <text evidence="2">Expressed in the intermediate phase of the viral replicative cycle.</text>
</comment>
<comment type="similarity">
    <text evidence="4">Belongs to the serpin family. Orthopoxvirus OPG040 subfamily.</text>
</comment>
<reference key="1">
    <citation type="journal article" date="1993" name="FEBS Lett.">
        <title>Genes of variola and vaccinia viruses necessary to overcome the host protective mechanisms.</title>
        <authorList>
            <person name="Shchelkunov S.N."/>
            <person name="Blinov V.M."/>
            <person name="Sandakhchiev L.S."/>
        </authorList>
    </citation>
    <scope>NUCLEOTIDE SEQUENCE [GENOMIC DNA]</scope>
    <source>
        <strain>India-1967 / Isolate Ind3</strain>
    </source>
</reference>
<protein>
    <recommendedName>
        <fullName>Superinfection exclusion protein</fullName>
    </recommendedName>
    <alternativeName>
        <fullName>Protein K2</fullName>
    </alternativeName>
    <alternativeName>
        <fullName>Serine proteinase inhibitor 3</fullName>
    </alternativeName>
</protein>
<sequence length="373" mass="42660">MIVLLILSLACTAFTYRLQGFTNAGIVAYKNIQDGNEDDNIVFSPFGYSFSMFMSLLPASGNTKVELLKTMDLRKIDLGPAFTELISGLAKPKTSKYTYTDLTYQSFVDNTVCIKPSYYQQYHRFGLYRLNFRRDAVNKINSIVERRSGMSNVVDSTMLDNNTLWAIINTIYFKGTWQYPFDITKTHNTSFTNKYGTKTVPMMSVVTKLQGNTITIDDEEYDMVRLQYKDANISMYLAIGDNMTHFTDSIMAAKLDYWSSQLGNKVYNLKLPRFSIENKRDIKSIAEMMAPSMFNPDNASFKHMTRDPLYIYKMFQNAKIDVNEQGTVAEASTIMVATVRSSPEELEFNTPFVFIIRHDITGFILFMGKVESP</sequence>
<dbReference type="EMBL" id="X69198">
    <property type="protein sequence ID" value="CAA48963.1"/>
    <property type="molecule type" value="Genomic_DNA"/>
</dbReference>
<dbReference type="PIR" id="B36839">
    <property type="entry name" value="B36839"/>
</dbReference>
<dbReference type="RefSeq" id="NP_042066.1">
    <property type="nucleotide sequence ID" value="NC_001611.1"/>
</dbReference>
<dbReference type="SMR" id="P33831"/>
<dbReference type="MEROPS" id="I04.047"/>
<dbReference type="GeneID" id="1486579"/>
<dbReference type="KEGG" id="vg:1486579"/>
<dbReference type="Proteomes" id="UP000002060">
    <property type="component" value="Segment"/>
</dbReference>
<dbReference type="GO" id="GO:0005615">
    <property type="term" value="C:extracellular space"/>
    <property type="evidence" value="ECO:0007669"/>
    <property type="project" value="InterPro"/>
</dbReference>
<dbReference type="GO" id="GO:0020002">
    <property type="term" value="C:host cell plasma membrane"/>
    <property type="evidence" value="ECO:0007669"/>
    <property type="project" value="UniProtKB-SubCell"/>
</dbReference>
<dbReference type="GO" id="GO:0016020">
    <property type="term" value="C:membrane"/>
    <property type="evidence" value="ECO:0007669"/>
    <property type="project" value="UniProtKB-KW"/>
</dbReference>
<dbReference type="GO" id="GO:0055036">
    <property type="term" value="C:virion membrane"/>
    <property type="evidence" value="ECO:0007669"/>
    <property type="project" value="UniProtKB-SubCell"/>
</dbReference>
<dbReference type="GO" id="GO:0004867">
    <property type="term" value="F:serine-type endopeptidase inhibitor activity"/>
    <property type="evidence" value="ECO:0007669"/>
    <property type="project" value="UniProtKB-KW"/>
</dbReference>
<dbReference type="CDD" id="cd19584">
    <property type="entry name" value="serpinO_SPI-3_virus"/>
    <property type="match status" value="1"/>
</dbReference>
<dbReference type="FunFam" id="2.10.310.10:FF:000001">
    <property type="entry name" value="Serpin family A member 1"/>
    <property type="match status" value="1"/>
</dbReference>
<dbReference type="Gene3D" id="2.30.39.10">
    <property type="entry name" value="Alpha-1-antitrypsin, domain 1"/>
    <property type="match status" value="1"/>
</dbReference>
<dbReference type="Gene3D" id="3.30.497.10">
    <property type="entry name" value="Antithrombin, subunit I, domain 2"/>
    <property type="match status" value="1"/>
</dbReference>
<dbReference type="InterPro" id="IPR023796">
    <property type="entry name" value="Serpin_dom"/>
</dbReference>
<dbReference type="InterPro" id="IPR000215">
    <property type="entry name" value="Serpin_fam"/>
</dbReference>
<dbReference type="InterPro" id="IPR036186">
    <property type="entry name" value="Serpin_sf"/>
</dbReference>
<dbReference type="InterPro" id="IPR042178">
    <property type="entry name" value="Serpin_sf_1"/>
</dbReference>
<dbReference type="InterPro" id="IPR042185">
    <property type="entry name" value="Serpin_sf_2"/>
</dbReference>
<dbReference type="PANTHER" id="PTHR11461:SF211">
    <property type="entry name" value="GH10112P-RELATED"/>
    <property type="match status" value="1"/>
</dbReference>
<dbReference type="PANTHER" id="PTHR11461">
    <property type="entry name" value="SERINE PROTEASE INHIBITOR, SERPIN"/>
    <property type="match status" value="1"/>
</dbReference>
<dbReference type="Pfam" id="PF00079">
    <property type="entry name" value="Serpin"/>
    <property type="match status" value="1"/>
</dbReference>
<dbReference type="SMART" id="SM00093">
    <property type="entry name" value="SERPIN"/>
    <property type="match status" value="1"/>
</dbReference>
<dbReference type="SUPFAM" id="SSF56574">
    <property type="entry name" value="Serpins"/>
    <property type="match status" value="1"/>
</dbReference>
<gene>
    <name type="primary">OPG040</name>
    <name type="ORF">C2L</name>
    <name type="ORF">SPI-3</name>
</gene>
<organism>
    <name type="scientific">Variola virus (isolate Human/India/Ind3/1967)</name>
    <name type="common">VARV</name>
    <name type="synonym">Smallpox virus</name>
    <dbReference type="NCBI Taxonomy" id="587200"/>
    <lineage>
        <taxon>Viruses</taxon>
        <taxon>Varidnaviria</taxon>
        <taxon>Bamfordvirae</taxon>
        <taxon>Nucleocytoviricota</taxon>
        <taxon>Pokkesviricetes</taxon>
        <taxon>Chitovirales</taxon>
        <taxon>Poxviridae</taxon>
        <taxon>Chordopoxvirinae</taxon>
        <taxon>Orthopoxvirus</taxon>
        <taxon>Variola virus</taxon>
    </lineage>
</organism>
<evidence type="ECO:0000250" key="1"/>
<evidence type="ECO:0000250" key="2">
    <source>
        <dbReference type="UniProtKB" id="P18384"/>
    </source>
</evidence>
<evidence type="ECO:0000255" key="3"/>
<evidence type="ECO:0000305" key="4"/>
<accession>P33831</accession>